<organism>
    <name type="scientific">Leuconostoc mesenteroides subsp. mesenteroides (strain ATCC 8293 / DSM 20343 / BCRC 11652 / CCM 1803 / JCM 6124 / NCDO 523 / NBRC 100496 / NCIMB 8023 / NCTC 12954 / NRRL B-1118 / 37Y)</name>
    <dbReference type="NCBI Taxonomy" id="203120"/>
    <lineage>
        <taxon>Bacteria</taxon>
        <taxon>Bacillati</taxon>
        <taxon>Bacillota</taxon>
        <taxon>Bacilli</taxon>
        <taxon>Lactobacillales</taxon>
        <taxon>Lactobacillaceae</taxon>
        <taxon>Leuconostoc</taxon>
    </lineage>
</organism>
<feature type="chain" id="PRO_0000336318" description="Imidazoleglycerol-phosphate dehydratase">
    <location>
        <begin position="1"/>
        <end position="195"/>
    </location>
</feature>
<sequence>MSRTATIKRDTFETQIELTLDLDEQTPIKVDTGIGYIDHMLTLFAKHGRFGLQVDVKGDLQVDSHHTTEDIGIVLGEAFTQALGDKVGIERYGAQFVPMDETLTRAVIDLSGRSYLVLHAELTAPTLGTFETEVVEDFWQGFADQARANVHIEVLYGRNTHHKIESMFKAVGRAMRQAITINPEIKGVNSTKGRI</sequence>
<name>HIS7_LEUMM</name>
<proteinExistence type="inferred from homology"/>
<accession>Q03VX7</accession>
<reference key="1">
    <citation type="journal article" date="2006" name="Proc. Natl. Acad. Sci. U.S.A.">
        <title>Comparative genomics of the lactic acid bacteria.</title>
        <authorList>
            <person name="Makarova K.S."/>
            <person name="Slesarev A."/>
            <person name="Wolf Y.I."/>
            <person name="Sorokin A."/>
            <person name="Mirkin B."/>
            <person name="Koonin E.V."/>
            <person name="Pavlov A."/>
            <person name="Pavlova N."/>
            <person name="Karamychev V."/>
            <person name="Polouchine N."/>
            <person name="Shakhova V."/>
            <person name="Grigoriev I."/>
            <person name="Lou Y."/>
            <person name="Rohksar D."/>
            <person name="Lucas S."/>
            <person name="Huang K."/>
            <person name="Goodstein D.M."/>
            <person name="Hawkins T."/>
            <person name="Plengvidhya V."/>
            <person name="Welker D."/>
            <person name="Hughes J."/>
            <person name="Goh Y."/>
            <person name="Benson A."/>
            <person name="Baldwin K."/>
            <person name="Lee J.-H."/>
            <person name="Diaz-Muniz I."/>
            <person name="Dosti B."/>
            <person name="Smeianov V."/>
            <person name="Wechter W."/>
            <person name="Barabote R."/>
            <person name="Lorca G."/>
            <person name="Altermann E."/>
            <person name="Barrangou R."/>
            <person name="Ganesan B."/>
            <person name="Xie Y."/>
            <person name="Rawsthorne H."/>
            <person name="Tamir D."/>
            <person name="Parker C."/>
            <person name="Breidt F."/>
            <person name="Broadbent J.R."/>
            <person name="Hutkins R."/>
            <person name="O'Sullivan D."/>
            <person name="Steele J."/>
            <person name="Unlu G."/>
            <person name="Saier M.H. Jr."/>
            <person name="Klaenhammer T."/>
            <person name="Richardson P."/>
            <person name="Kozyavkin S."/>
            <person name="Weimer B.C."/>
            <person name="Mills D.A."/>
        </authorList>
    </citation>
    <scope>NUCLEOTIDE SEQUENCE [LARGE SCALE GENOMIC DNA]</scope>
    <source>
        <strain>ATCC 8293 / DSM 20343 / BCRC 11652 / CCM 1803 / JCM 6124 / NCDO 523 / NBRC 100496 / NCIMB 8023 / NCTC 12954 / NRRL B-1118 / 37Y</strain>
    </source>
</reference>
<evidence type="ECO:0000255" key="1">
    <source>
        <dbReference type="HAMAP-Rule" id="MF_00076"/>
    </source>
</evidence>
<dbReference type="EC" id="4.2.1.19" evidence="1"/>
<dbReference type="EMBL" id="CP000414">
    <property type="protein sequence ID" value="ABJ62645.1"/>
    <property type="molecule type" value="Genomic_DNA"/>
</dbReference>
<dbReference type="RefSeq" id="WP_010284284.1">
    <property type="nucleotide sequence ID" value="NC_008531.1"/>
</dbReference>
<dbReference type="SMR" id="Q03VX7"/>
<dbReference type="EnsemblBacteria" id="ABJ62645">
    <property type="protein sequence ID" value="ABJ62645"/>
    <property type="gene ID" value="LEUM_1553"/>
</dbReference>
<dbReference type="GeneID" id="29577143"/>
<dbReference type="KEGG" id="lme:LEUM_1553"/>
<dbReference type="eggNOG" id="COG0131">
    <property type="taxonomic scope" value="Bacteria"/>
</dbReference>
<dbReference type="HOGENOM" id="CLU_044308_3_0_9"/>
<dbReference type="UniPathway" id="UPA00031">
    <property type="reaction ID" value="UER00011"/>
</dbReference>
<dbReference type="Proteomes" id="UP000000362">
    <property type="component" value="Chromosome"/>
</dbReference>
<dbReference type="GO" id="GO:0005737">
    <property type="term" value="C:cytoplasm"/>
    <property type="evidence" value="ECO:0007669"/>
    <property type="project" value="UniProtKB-SubCell"/>
</dbReference>
<dbReference type="GO" id="GO:0004424">
    <property type="term" value="F:imidazoleglycerol-phosphate dehydratase activity"/>
    <property type="evidence" value="ECO:0007669"/>
    <property type="project" value="UniProtKB-UniRule"/>
</dbReference>
<dbReference type="GO" id="GO:0000105">
    <property type="term" value="P:L-histidine biosynthetic process"/>
    <property type="evidence" value="ECO:0007669"/>
    <property type="project" value="UniProtKB-UniRule"/>
</dbReference>
<dbReference type="CDD" id="cd07914">
    <property type="entry name" value="IGPD"/>
    <property type="match status" value="1"/>
</dbReference>
<dbReference type="FunFam" id="3.30.230.40:FF:000001">
    <property type="entry name" value="Imidazoleglycerol-phosphate dehydratase HisB"/>
    <property type="match status" value="1"/>
</dbReference>
<dbReference type="FunFam" id="3.30.230.40:FF:000003">
    <property type="entry name" value="Imidazoleglycerol-phosphate dehydratase HisB"/>
    <property type="match status" value="1"/>
</dbReference>
<dbReference type="Gene3D" id="3.30.230.40">
    <property type="entry name" value="Imidazole glycerol phosphate dehydratase, domain 1"/>
    <property type="match status" value="2"/>
</dbReference>
<dbReference type="HAMAP" id="MF_00076">
    <property type="entry name" value="HisB"/>
    <property type="match status" value="1"/>
</dbReference>
<dbReference type="InterPro" id="IPR038494">
    <property type="entry name" value="IGPD_sf"/>
</dbReference>
<dbReference type="InterPro" id="IPR000807">
    <property type="entry name" value="ImidazoleglycerolP_deHydtase"/>
</dbReference>
<dbReference type="InterPro" id="IPR020565">
    <property type="entry name" value="ImidazoleglycerP_deHydtase_CS"/>
</dbReference>
<dbReference type="InterPro" id="IPR020568">
    <property type="entry name" value="Ribosomal_Su5_D2-typ_SF"/>
</dbReference>
<dbReference type="NCBIfam" id="NF002107">
    <property type="entry name" value="PRK00951.1-2"/>
    <property type="match status" value="1"/>
</dbReference>
<dbReference type="NCBIfam" id="NF002111">
    <property type="entry name" value="PRK00951.2-1"/>
    <property type="match status" value="1"/>
</dbReference>
<dbReference type="NCBIfam" id="NF002114">
    <property type="entry name" value="PRK00951.2-4"/>
    <property type="match status" value="1"/>
</dbReference>
<dbReference type="PANTHER" id="PTHR23133:SF2">
    <property type="entry name" value="IMIDAZOLEGLYCEROL-PHOSPHATE DEHYDRATASE"/>
    <property type="match status" value="1"/>
</dbReference>
<dbReference type="PANTHER" id="PTHR23133">
    <property type="entry name" value="IMIDAZOLEGLYCEROL-PHOSPHATE DEHYDRATASE HIS7"/>
    <property type="match status" value="1"/>
</dbReference>
<dbReference type="Pfam" id="PF00475">
    <property type="entry name" value="IGPD"/>
    <property type="match status" value="1"/>
</dbReference>
<dbReference type="SUPFAM" id="SSF54211">
    <property type="entry name" value="Ribosomal protein S5 domain 2-like"/>
    <property type="match status" value="2"/>
</dbReference>
<dbReference type="PROSITE" id="PS00954">
    <property type="entry name" value="IGP_DEHYDRATASE_1"/>
    <property type="match status" value="1"/>
</dbReference>
<dbReference type="PROSITE" id="PS00955">
    <property type="entry name" value="IGP_DEHYDRATASE_2"/>
    <property type="match status" value="1"/>
</dbReference>
<keyword id="KW-0028">Amino-acid biosynthesis</keyword>
<keyword id="KW-0963">Cytoplasm</keyword>
<keyword id="KW-0368">Histidine biosynthesis</keyword>
<keyword id="KW-0456">Lyase</keyword>
<keyword id="KW-1185">Reference proteome</keyword>
<comment type="catalytic activity">
    <reaction evidence="1">
        <text>D-erythro-1-(imidazol-4-yl)glycerol 3-phosphate = 3-(imidazol-4-yl)-2-oxopropyl phosphate + H2O</text>
        <dbReference type="Rhea" id="RHEA:11040"/>
        <dbReference type="ChEBI" id="CHEBI:15377"/>
        <dbReference type="ChEBI" id="CHEBI:57766"/>
        <dbReference type="ChEBI" id="CHEBI:58278"/>
        <dbReference type="EC" id="4.2.1.19"/>
    </reaction>
</comment>
<comment type="pathway">
    <text evidence="1">Amino-acid biosynthesis; L-histidine biosynthesis; L-histidine from 5-phospho-alpha-D-ribose 1-diphosphate: step 6/9.</text>
</comment>
<comment type="subcellular location">
    <subcellularLocation>
        <location evidence="1">Cytoplasm</location>
    </subcellularLocation>
</comment>
<comment type="similarity">
    <text evidence="1">Belongs to the imidazoleglycerol-phosphate dehydratase family.</text>
</comment>
<gene>
    <name evidence="1" type="primary">hisB</name>
    <name type="ordered locus">LEUM_1553</name>
</gene>
<protein>
    <recommendedName>
        <fullName evidence="1">Imidazoleglycerol-phosphate dehydratase</fullName>
        <shortName evidence="1">IGPD</shortName>
        <ecNumber evidence="1">4.2.1.19</ecNumber>
    </recommendedName>
</protein>